<sequence>MDDDYMMLDDDYGEEEDENYSEDDNYSEAEVDLQPVTSTKSTSQVIKKESLVAAQKEILVRVMELLSVKENQARTLLIYYQWNVEKLFSVFADQGKDRMFSCAGLTVFVPSLVTSKKTMKCDVCMEDDLPSNVMTRMECGHRFCNDCWIGHFTVKINEGESKRILCMAHECKAICDEDVVRKLVSPELADRYDRFLIESYVEDNNMVKWCPSKPHCGSAIRKIEDGHDVVEVGCSCGLQFCFSCLSESHSPCSCLMWKLWKKKCEDESETVNWITVNTKLCPKCSKPIQKRDGCNLMTCKCGQHFCWLCGQATGRDHTYTSIAGHSCGRYKDEKVRQLERAQRDLDRYTHYHYRYKAHIDSLKLEDKLRKSILEKAVSNSETKDQKVFKEYSWVTDAVNRLFISRRILSQSYPFAFYMFGEELFKDEMSEKEREIKKNLFEDQQQQLEGNVEKLSKILEEPFDEYDHEKVVEMMRHLTNLTAVVDNLCKEMYECIENELLGPIQFGNHNIAPYRSKGIEQATEFCAESSDCGSSGSS</sequence>
<reference key="1">
    <citation type="journal article" date="2003" name="Plant Physiol.">
        <title>Identification and characterization of the ARIADNE gene family in Arabidopsis. A group of putative E3 ligases.</title>
        <authorList>
            <person name="Mladek C."/>
            <person name="Guger K."/>
            <person name="Hauser M.-T."/>
        </authorList>
    </citation>
    <scope>NUCLEOTIDE SEQUENCE [GENOMIC DNA]</scope>
    <scope>TISSUE SPECIFICITY</scope>
    <scope>NOMENCLATURE</scope>
    <scope>GENE FAMILY</scope>
    <source>
        <strain>cv. Columbia</strain>
    </source>
</reference>
<reference key="2">
    <citation type="journal article" date="2000" name="DNA Res.">
        <title>Structural analysis of Arabidopsis thaliana chromosome 3. I. Sequence features of the regions of 4,504,864 bp covered by sixty P1 and TAC clones.</title>
        <authorList>
            <person name="Sato S."/>
            <person name="Nakamura Y."/>
            <person name="Kaneko T."/>
            <person name="Katoh T."/>
            <person name="Asamizu E."/>
            <person name="Tabata S."/>
        </authorList>
    </citation>
    <scope>NUCLEOTIDE SEQUENCE [LARGE SCALE GENOMIC DNA]</scope>
    <source>
        <strain>cv. Columbia</strain>
    </source>
</reference>
<reference key="3">
    <citation type="journal article" date="2017" name="Plant J.">
        <title>Araport11: a complete reannotation of the Arabidopsis thaliana reference genome.</title>
        <authorList>
            <person name="Cheng C.Y."/>
            <person name="Krishnakumar V."/>
            <person name="Chan A.P."/>
            <person name="Thibaud-Nissen F."/>
            <person name="Schobel S."/>
            <person name="Town C.D."/>
        </authorList>
    </citation>
    <scope>GENOME REANNOTATION</scope>
    <source>
        <strain>cv. Columbia</strain>
    </source>
</reference>
<reference key="4">
    <citation type="journal article" date="2003" name="Science">
        <title>Empirical analysis of transcriptional activity in the Arabidopsis genome.</title>
        <authorList>
            <person name="Yamada K."/>
            <person name="Lim J."/>
            <person name="Dale J.M."/>
            <person name="Chen H."/>
            <person name="Shinn P."/>
            <person name="Palm C.J."/>
            <person name="Southwick A.M."/>
            <person name="Wu H.C."/>
            <person name="Kim C.J."/>
            <person name="Nguyen M."/>
            <person name="Pham P.K."/>
            <person name="Cheuk R.F."/>
            <person name="Karlin-Newmann G."/>
            <person name="Liu S.X."/>
            <person name="Lam B."/>
            <person name="Sakano H."/>
            <person name="Wu T."/>
            <person name="Yu G."/>
            <person name="Miranda M."/>
            <person name="Quach H.L."/>
            <person name="Tripp M."/>
            <person name="Chang C.H."/>
            <person name="Lee J.M."/>
            <person name="Toriumi M.J."/>
            <person name="Chan M.M."/>
            <person name="Tang C.C."/>
            <person name="Onodera C.S."/>
            <person name="Deng J.M."/>
            <person name="Akiyama K."/>
            <person name="Ansari Y."/>
            <person name="Arakawa T."/>
            <person name="Banh J."/>
            <person name="Banno F."/>
            <person name="Bowser L."/>
            <person name="Brooks S.Y."/>
            <person name="Carninci P."/>
            <person name="Chao Q."/>
            <person name="Choy N."/>
            <person name="Enju A."/>
            <person name="Goldsmith A.D."/>
            <person name="Gurjal M."/>
            <person name="Hansen N.F."/>
            <person name="Hayashizaki Y."/>
            <person name="Johnson-Hopson C."/>
            <person name="Hsuan V.W."/>
            <person name="Iida K."/>
            <person name="Karnes M."/>
            <person name="Khan S."/>
            <person name="Koesema E."/>
            <person name="Ishida J."/>
            <person name="Jiang P.X."/>
            <person name="Jones T."/>
            <person name="Kawai J."/>
            <person name="Kamiya A."/>
            <person name="Meyers C."/>
            <person name="Nakajima M."/>
            <person name="Narusaka M."/>
            <person name="Seki M."/>
            <person name="Sakurai T."/>
            <person name="Satou M."/>
            <person name="Tamse R."/>
            <person name="Vaysberg M."/>
            <person name="Wallender E.K."/>
            <person name="Wong C."/>
            <person name="Yamamura Y."/>
            <person name="Yuan S."/>
            <person name="Shinozaki K."/>
            <person name="Davis R.W."/>
            <person name="Theologis A."/>
            <person name="Ecker J.R."/>
        </authorList>
    </citation>
    <scope>NUCLEOTIDE SEQUENCE [LARGE SCALE MRNA]</scope>
    <source>
        <strain>cv. Columbia</strain>
    </source>
</reference>
<reference key="5">
    <citation type="journal article" date="2002" name="Mol. Biol. Evol.">
        <title>Comparative genomics of the RBR family, including the Parkinson's disease-related gene parkin and the genes of the ariadne subfamily.</title>
        <authorList>
            <person name="Marin I."/>
            <person name="Ferrus A."/>
        </authorList>
    </citation>
    <scope>FUNCTION</scope>
</reference>
<proteinExistence type="evidence at transcript level"/>
<dbReference type="EC" id="2.3.2.31" evidence="2"/>
<dbReference type="EMBL" id="AJ510206">
    <property type="protein sequence ID" value="CAD52885.1"/>
    <property type="molecule type" value="Genomic_DNA"/>
</dbReference>
<dbReference type="EMBL" id="AB018114">
    <property type="protein sequence ID" value="BAB02695.1"/>
    <property type="molecule type" value="Genomic_DNA"/>
</dbReference>
<dbReference type="EMBL" id="CP002686">
    <property type="protein sequence ID" value="AEE77355.1"/>
    <property type="molecule type" value="Genomic_DNA"/>
</dbReference>
<dbReference type="EMBL" id="AY072185">
    <property type="protein sequence ID" value="AAL60007.1"/>
    <property type="molecule type" value="mRNA"/>
</dbReference>
<dbReference type="EMBL" id="AY096743">
    <property type="protein sequence ID" value="AAM20377.1"/>
    <property type="molecule type" value="mRNA"/>
</dbReference>
<dbReference type="RefSeq" id="NP_189408.1">
    <property type="nucleotide sequence ID" value="NM_113687.3"/>
</dbReference>
<dbReference type="SMR" id="Q9LVX0"/>
<dbReference type="FunCoup" id="Q9LVX0">
    <property type="interactions" value="2911"/>
</dbReference>
<dbReference type="STRING" id="3702.Q9LVX0"/>
<dbReference type="PaxDb" id="3702-AT3G27710.1"/>
<dbReference type="ProteomicsDB" id="246833"/>
<dbReference type="EnsemblPlants" id="AT3G27710.1">
    <property type="protein sequence ID" value="AT3G27710.1"/>
    <property type="gene ID" value="AT3G27710"/>
</dbReference>
<dbReference type="GeneID" id="822393"/>
<dbReference type="Gramene" id="AT3G27710.1">
    <property type="protein sequence ID" value="AT3G27710.1"/>
    <property type="gene ID" value="AT3G27710"/>
</dbReference>
<dbReference type="KEGG" id="ath:AT3G27710"/>
<dbReference type="Araport" id="AT3G27710"/>
<dbReference type="TAIR" id="AT3G27710">
    <property type="gene designation" value="ARI3"/>
</dbReference>
<dbReference type="eggNOG" id="KOG1815">
    <property type="taxonomic scope" value="Eukaryota"/>
</dbReference>
<dbReference type="HOGENOM" id="CLU_009823_2_0_1"/>
<dbReference type="InParanoid" id="Q9LVX0"/>
<dbReference type="OMA" id="VMTRMEC"/>
<dbReference type="PhylomeDB" id="Q9LVX0"/>
<dbReference type="UniPathway" id="UPA00143"/>
<dbReference type="PRO" id="PR:Q9LVX0"/>
<dbReference type="Proteomes" id="UP000006548">
    <property type="component" value="Chromosome 3"/>
</dbReference>
<dbReference type="ExpressionAtlas" id="Q9LVX0">
    <property type="expression patterns" value="baseline and differential"/>
</dbReference>
<dbReference type="GO" id="GO:0004842">
    <property type="term" value="F:ubiquitin-protein transferase activity"/>
    <property type="evidence" value="ECO:0007669"/>
    <property type="project" value="InterPro"/>
</dbReference>
<dbReference type="GO" id="GO:0008270">
    <property type="term" value="F:zinc ion binding"/>
    <property type="evidence" value="ECO:0007669"/>
    <property type="project" value="UniProtKB-KW"/>
</dbReference>
<dbReference type="GO" id="GO:0016567">
    <property type="term" value="P:protein ubiquitination"/>
    <property type="evidence" value="ECO:0007669"/>
    <property type="project" value="UniProtKB-UniPathway"/>
</dbReference>
<dbReference type="CDD" id="cd20346">
    <property type="entry name" value="BRcat_RBR_ANKIB1"/>
    <property type="match status" value="1"/>
</dbReference>
<dbReference type="CDD" id="cd22586">
    <property type="entry name" value="Rcat_RBR_ARI1-like"/>
    <property type="match status" value="1"/>
</dbReference>
<dbReference type="CDD" id="cd16773">
    <property type="entry name" value="RING-HC_RBR_TRIAD1"/>
    <property type="match status" value="1"/>
</dbReference>
<dbReference type="FunFam" id="1.20.120.1750:FF:000013">
    <property type="entry name" value="RBR-type E3 ubiquitin transferase"/>
    <property type="match status" value="1"/>
</dbReference>
<dbReference type="FunFam" id="3.30.40.10:FF:000019">
    <property type="entry name" value="RBR-type E3 ubiquitin transferase"/>
    <property type="match status" value="1"/>
</dbReference>
<dbReference type="Gene3D" id="1.20.120.1750">
    <property type="match status" value="1"/>
</dbReference>
<dbReference type="Gene3D" id="3.30.40.10">
    <property type="entry name" value="Zinc/RING finger domain, C3HC4 (zinc finger)"/>
    <property type="match status" value="1"/>
</dbReference>
<dbReference type="InterPro" id="IPR045840">
    <property type="entry name" value="Ariadne"/>
</dbReference>
<dbReference type="InterPro" id="IPR048962">
    <property type="entry name" value="ARIH1-like_UBL"/>
</dbReference>
<dbReference type="InterPro" id="IPR031127">
    <property type="entry name" value="E3_UB_ligase_RBR"/>
</dbReference>
<dbReference type="InterPro" id="IPR002867">
    <property type="entry name" value="IBR_dom"/>
</dbReference>
<dbReference type="InterPro" id="IPR044066">
    <property type="entry name" value="TRIAD_supradom"/>
</dbReference>
<dbReference type="InterPro" id="IPR001841">
    <property type="entry name" value="Znf_RING"/>
</dbReference>
<dbReference type="InterPro" id="IPR013083">
    <property type="entry name" value="Znf_RING/FYVE/PHD"/>
</dbReference>
<dbReference type="PANTHER" id="PTHR11685">
    <property type="entry name" value="RBR FAMILY RING FINGER AND IBR DOMAIN-CONTAINING"/>
    <property type="match status" value="1"/>
</dbReference>
<dbReference type="Pfam" id="PF19422">
    <property type="entry name" value="Ariadne"/>
    <property type="match status" value="1"/>
</dbReference>
<dbReference type="Pfam" id="PF01485">
    <property type="entry name" value="IBR"/>
    <property type="match status" value="1"/>
</dbReference>
<dbReference type="Pfam" id="PF22191">
    <property type="entry name" value="IBR_1"/>
    <property type="match status" value="1"/>
</dbReference>
<dbReference type="Pfam" id="PF21235">
    <property type="entry name" value="UBA_ARI1"/>
    <property type="match status" value="1"/>
</dbReference>
<dbReference type="SMART" id="SM00647">
    <property type="entry name" value="IBR"/>
    <property type="match status" value="2"/>
</dbReference>
<dbReference type="SUPFAM" id="SSF57850">
    <property type="entry name" value="RING/U-box"/>
    <property type="match status" value="3"/>
</dbReference>
<dbReference type="PROSITE" id="PS51873">
    <property type="entry name" value="TRIAD"/>
    <property type="match status" value="1"/>
</dbReference>
<dbReference type="PROSITE" id="PS50089">
    <property type="entry name" value="ZF_RING_2"/>
    <property type="match status" value="1"/>
</dbReference>
<accession>Q9LVX0</accession>
<evidence type="ECO:0000250" key="1"/>
<evidence type="ECO:0000250" key="2">
    <source>
        <dbReference type="UniProtKB" id="Q9Y4X5"/>
    </source>
</evidence>
<evidence type="ECO:0000255" key="3">
    <source>
        <dbReference type="PROSITE-ProRule" id="PRU01221"/>
    </source>
</evidence>
<evidence type="ECO:0000256" key="4">
    <source>
        <dbReference type="SAM" id="MobiDB-lite"/>
    </source>
</evidence>
<evidence type="ECO:0000269" key="5">
    <source>
    </source>
</evidence>
<evidence type="ECO:0000269" key="6">
    <source>
    </source>
</evidence>
<evidence type="ECO:0000305" key="7"/>
<keyword id="KW-0479">Metal-binding</keyword>
<keyword id="KW-1185">Reference proteome</keyword>
<keyword id="KW-0677">Repeat</keyword>
<keyword id="KW-0808">Transferase</keyword>
<keyword id="KW-0833">Ubl conjugation pathway</keyword>
<keyword id="KW-0862">Zinc</keyword>
<keyword id="KW-0863">Zinc-finger</keyword>
<comment type="function">
    <text evidence="1 5">Might act as an E3 ubiquitin-protein ligase, or as part of E3 complex, which accepts ubiquitin from specific E2 ubiquitin-conjugating enzymes and then transfers it to substrates.</text>
</comment>
<comment type="catalytic activity">
    <reaction evidence="2">
        <text>[E2 ubiquitin-conjugating enzyme]-S-ubiquitinyl-L-cysteine + [acceptor protein]-L-lysine = [E2 ubiquitin-conjugating enzyme]-L-cysteine + [acceptor protein]-N(6)-ubiquitinyl-L-lysine.</text>
        <dbReference type="EC" id="2.3.2.31"/>
    </reaction>
</comment>
<comment type="cofactor">
    <cofactor evidence="7">
        <name>Zn(2+)</name>
        <dbReference type="ChEBI" id="CHEBI:29105"/>
    </cofactor>
    <text evidence="7">Binds 4 Zn(2+) ions per subunit.</text>
</comment>
<comment type="pathway">
    <text>Protein modification; protein ubiquitination.</text>
</comment>
<comment type="tissue specificity">
    <text evidence="6">Ubiquitous.</text>
</comment>
<comment type="domain">
    <text evidence="2">Members of the RBR family are atypical E3 ligases. They interact with the E2 conjugating enzyme UBE2L3 and function like HECT-type E3 enzymes: they bind E2s via the first RING-type zinc finger, but require an obligate trans-thiolation step during the ubiquitin transfer, requiring a conserved active site Cys residue in the second RING-type zinc finger. The active site probably forms a thioester intermediate with ubiquitin taken from the active-site cysteine of the E2 before ultimately transferring it to a Lys residue on the substrate.</text>
</comment>
<comment type="similarity">
    <text evidence="7">Belongs to the RBR family. Ariadne subfamily.</text>
</comment>
<comment type="caution">
    <text evidence="7">Lacks the His residue in the RING-type domain 2 that is one of the conserved features of the family.</text>
</comment>
<name>ARI3_ARATH</name>
<feature type="chain" id="PRO_0000356196" description="Probable E3 ubiquitin-protein ligase ARI3">
    <location>
        <begin position="1"/>
        <end position="537"/>
    </location>
</feature>
<feature type="zinc finger region" description="RING-type 1" evidence="3">
    <location>
        <begin position="121"/>
        <end position="171"/>
    </location>
</feature>
<feature type="zinc finger region" description="IBR-type" evidence="3">
    <location>
        <begin position="190"/>
        <end position="254"/>
    </location>
</feature>
<feature type="zinc finger region" description="RING-type 2; atypical" evidence="3">
    <location>
        <begin position="281"/>
        <end position="309"/>
    </location>
</feature>
<feature type="region of interest" description="Disordered" evidence="4">
    <location>
        <begin position="1"/>
        <end position="30"/>
    </location>
</feature>
<feature type="region of interest" description="TRIAD supradomain" evidence="3">
    <location>
        <begin position="117"/>
        <end position="331"/>
    </location>
</feature>
<feature type="active site" evidence="3">
    <location>
        <position position="294"/>
    </location>
</feature>
<feature type="binding site" evidence="3">
    <location>
        <position position="121"/>
    </location>
    <ligand>
        <name>Zn(2+)</name>
        <dbReference type="ChEBI" id="CHEBI:29105"/>
        <label>1</label>
    </ligand>
</feature>
<feature type="binding site" evidence="3">
    <location>
        <position position="124"/>
    </location>
    <ligand>
        <name>Zn(2+)</name>
        <dbReference type="ChEBI" id="CHEBI:29105"/>
        <label>1</label>
    </ligand>
</feature>
<feature type="binding site" evidence="3">
    <location>
        <position position="139"/>
    </location>
    <ligand>
        <name>Zn(2+)</name>
        <dbReference type="ChEBI" id="CHEBI:29105"/>
        <label>2</label>
    </ligand>
</feature>
<feature type="binding site" evidence="3">
    <location>
        <position position="141"/>
    </location>
    <ligand>
        <name>Zn(2+)</name>
        <dbReference type="ChEBI" id="CHEBI:29105"/>
        <label>2</label>
    </ligand>
</feature>
<feature type="binding site" evidence="3">
    <location>
        <position position="144"/>
    </location>
    <ligand>
        <name>Zn(2+)</name>
        <dbReference type="ChEBI" id="CHEBI:29105"/>
        <label>1</label>
    </ligand>
</feature>
<feature type="binding site" evidence="3">
    <location>
        <position position="147"/>
    </location>
    <ligand>
        <name>Zn(2+)</name>
        <dbReference type="ChEBI" id="CHEBI:29105"/>
        <label>1</label>
    </ligand>
</feature>
<feature type="binding site" evidence="3">
    <location>
        <position position="166"/>
    </location>
    <ligand>
        <name>Zn(2+)</name>
        <dbReference type="ChEBI" id="CHEBI:29105"/>
        <label>2</label>
    </ligand>
</feature>
<feature type="binding site" evidence="3">
    <location>
        <position position="171"/>
    </location>
    <ligand>
        <name>Zn(2+)</name>
        <dbReference type="ChEBI" id="CHEBI:29105"/>
        <label>2</label>
    </ligand>
</feature>
<feature type="binding site" evidence="3">
    <location>
        <position position="210"/>
    </location>
    <ligand>
        <name>Zn(2+)</name>
        <dbReference type="ChEBI" id="CHEBI:29105"/>
        <label>3</label>
    </ligand>
</feature>
<feature type="binding site" evidence="3">
    <location>
        <position position="216"/>
    </location>
    <ligand>
        <name>Zn(2+)</name>
        <dbReference type="ChEBI" id="CHEBI:29105"/>
        <label>3</label>
    </ligand>
</feature>
<feature type="binding site" evidence="3">
    <location>
        <position position="234"/>
    </location>
    <ligand>
        <name>Zn(2+)</name>
        <dbReference type="ChEBI" id="CHEBI:29105"/>
        <label>3</label>
    </ligand>
</feature>
<feature type="binding site" evidence="3">
    <location>
        <position position="236"/>
    </location>
    <ligand>
        <name>Zn(2+)</name>
        <dbReference type="ChEBI" id="CHEBI:29105"/>
        <label>3</label>
    </ligand>
</feature>
<feature type="binding site" evidence="3">
    <location>
        <position position="241"/>
    </location>
    <ligand>
        <name>Zn(2+)</name>
        <dbReference type="ChEBI" id="CHEBI:29105"/>
        <label>4</label>
    </ligand>
</feature>
<feature type="binding site" evidence="3">
    <location>
        <position position="244"/>
    </location>
    <ligand>
        <name>Zn(2+)</name>
        <dbReference type="ChEBI" id="CHEBI:29105"/>
        <label>4</label>
    </ligand>
</feature>
<feature type="binding site" evidence="3">
    <location>
        <position position="249"/>
    </location>
    <ligand>
        <name>Zn(2+)</name>
        <dbReference type="ChEBI" id="CHEBI:29105"/>
        <label>4</label>
    </ligand>
</feature>
<feature type="binding site" evidence="3">
    <location>
        <position position="254"/>
    </location>
    <ligand>
        <name>Zn(2+)</name>
        <dbReference type="ChEBI" id="CHEBI:29105"/>
        <label>4</label>
    </ligand>
</feature>
<feature type="binding site" evidence="3">
    <location>
        <position position="281"/>
    </location>
    <ligand>
        <name>Zn(2+)</name>
        <dbReference type="ChEBI" id="CHEBI:29105"/>
        <label>5</label>
    </ligand>
</feature>
<feature type="binding site" evidence="3">
    <location>
        <position position="284"/>
    </location>
    <ligand>
        <name>Zn(2+)</name>
        <dbReference type="ChEBI" id="CHEBI:29105"/>
        <label>5</label>
    </ligand>
</feature>
<feature type="binding site" evidence="3">
    <location>
        <position position="299"/>
    </location>
    <ligand>
        <name>Zn(2+)</name>
        <dbReference type="ChEBI" id="CHEBI:29105"/>
        <label>5</label>
    </ligand>
</feature>
<feature type="binding site" evidence="3">
    <location>
        <position position="301"/>
    </location>
    <ligand>
        <name>Zn(2+)</name>
        <dbReference type="ChEBI" id="CHEBI:29105"/>
        <label>5</label>
    </ligand>
</feature>
<feature type="binding site" evidence="3">
    <location>
        <position position="306"/>
    </location>
    <ligand>
        <name>Zn(2+)</name>
        <dbReference type="ChEBI" id="CHEBI:29105"/>
        <label>6</label>
    </ligand>
</feature>
<feature type="binding site" evidence="3">
    <location>
        <position position="309"/>
    </location>
    <ligand>
        <name>Zn(2+)</name>
        <dbReference type="ChEBI" id="CHEBI:29105"/>
        <label>6</label>
    </ligand>
</feature>
<feature type="binding site" evidence="3">
    <location>
        <position position="317"/>
    </location>
    <ligand>
        <name>Zn(2+)</name>
        <dbReference type="ChEBI" id="CHEBI:29105"/>
        <label>6</label>
    </ligand>
</feature>
<feature type="binding site" evidence="3">
    <location>
        <position position="327"/>
    </location>
    <ligand>
        <name>Zn(2+)</name>
        <dbReference type="ChEBI" id="CHEBI:29105"/>
        <label>6</label>
    </ligand>
</feature>
<organism>
    <name type="scientific">Arabidopsis thaliana</name>
    <name type="common">Mouse-ear cress</name>
    <dbReference type="NCBI Taxonomy" id="3702"/>
    <lineage>
        <taxon>Eukaryota</taxon>
        <taxon>Viridiplantae</taxon>
        <taxon>Streptophyta</taxon>
        <taxon>Embryophyta</taxon>
        <taxon>Tracheophyta</taxon>
        <taxon>Spermatophyta</taxon>
        <taxon>Magnoliopsida</taxon>
        <taxon>eudicotyledons</taxon>
        <taxon>Gunneridae</taxon>
        <taxon>Pentapetalae</taxon>
        <taxon>rosids</taxon>
        <taxon>malvids</taxon>
        <taxon>Brassicales</taxon>
        <taxon>Brassicaceae</taxon>
        <taxon>Camelineae</taxon>
        <taxon>Arabidopsis</taxon>
    </lineage>
</organism>
<protein>
    <recommendedName>
        <fullName>Probable E3 ubiquitin-protein ligase ARI3</fullName>
        <ecNumber evidence="2">2.3.2.31</ecNumber>
    </recommendedName>
    <alternativeName>
        <fullName>ARIADNE-like protein ARI3</fullName>
    </alternativeName>
    <alternativeName>
        <fullName>Protein ariadne homolog 3</fullName>
    </alternativeName>
    <alternativeName>
        <fullName evidence="7">RING-type E3 ubiquitin transferase ARI3</fullName>
    </alternativeName>
</protein>
<gene>
    <name type="primary">ARI3</name>
    <name type="ordered locus">At3g27710</name>
    <name type="ORF">MGF10.7</name>
</gene>